<evidence type="ECO:0000255" key="1">
    <source>
        <dbReference type="HAMAP-Rule" id="MF_00227"/>
    </source>
</evidence>
<sequence length="118" mass="13887">MNTYAFNRELRLLTPEHYQNVFQQAHRAGSPHFTIIARNNKLSHPRLGLAVPKKQIKTAVGRNRFKRLARESFRNNQHQLPNKDFVVIAKKSAQDLSNEELFKLFDKLWHRLSRPSRG</sequence>
<gene>
    <name evidence="1" type="primary">rnpA</name>
    <name type="ordered locus">VIBHAR_00437</name>
</gene>
<feature type="chain" id="PRO_1000021489" description="Ribonuclease P protein component">
    <location>
        <begin position="1"/>
        <end position="118"/>
    </location>
</feature>
<comment type="function">
    <text evidence="1">RNaseP catalyzes the removal of the 5'-leader sequence from pre-tRNA to produce the mature 5'-terminus. It can also cleave other RNA substrates such as 4.5S RNA. The protein component plays an auxiliary but essential role in vivo by binding to the 5'-leader sequence and broadening the substrate specificity of the ribozyme.</text>
</comment>
<comment type="catalytic activity">
    <reaction evidence="1">
        <text>Endonucleolytic cleavage of RNA, removing 5'-extranucleotides from tRNA precursor.</text>
        <dbReference type="EC" id="3.1.26.5"/>
    </reaction>
</comment>
<comment type="subunit">
    <text evidence="1">Consists of a catalytic RNA component (M1 or rnpB) and a protein subunit.</text>
</comment>
<comment type="similarity">
    <text evidence="1">Belongs to the RnpA family.</text>
</comment>
<accession>A7N1E4</accession>
<proteinExistence type="inferred from homology"/>
<protein>
    <recommendedName>
        <fullName evidence="1">Ribonuclease P protein component</fullName>
        <shortName evidence="1">RNase P protein</shortName>
        <shortName evidence="1">RNaseP protein</shortName>
        <ecNumber evidence="1">3.1.26.5</ecNumber>
    </recommendedName>
    <alternativeName>
        <fullName evidence="1">Protein C5</fullName>
    </alternativeName>
</protein>
<dbReference type="EC" id="3.1.26.5" evidence="1"/>
<dbReference type="EMBL" id="CP000789">
    <property type="protein sequence ID" value="ABU69452.1"/>
    <property type="molecule type" value="Genomic_DNA"/>
</dbReference>
<dbReference type="SMR" id="A7N1E4"/>
<dbReference type="KEGG" id="vha:VIBHAR_00437"/>
<dbReference type="PATRIC" id="fig|338187.25.peg.2153"/>
<dbReference type="Proteomes" id="UP000008152">
    <property type="component" value="Chromosome I"/>
</dbReference>
<dbReference type="GO" id="GO:0030677">
    <property type="term" value="C:ribonuclease P complex"/>
    <property type="evidence" value="ECO:0007669"/>
    <property type="project" value="TreeGrafter"/>
</dbReference>
<dbReference type="GO" id="GO:0042781">
    <property type="term" value="F:3'-tRNA processing endoribonuclease activity"/>
    <property type="evidence" value="ECO:0007669"/>
    <property type="project" value="TreeGrafter"/>
</dbReference>
<dbReference type="GO" id="GO:0004526">
    <property type="term" value="F:ribonuclease P activity"/>
    <property type="evidence" value="ECO:0007669"/>
    <property type="project" value="UniProtKB-UniRule"/>
</dbReference>
<dbReference type="GO" id="GO:0000049">
    <property type="term" value="F:tRNA binding"/>
    <property type="evidence" value="ECO:0007669"/>
    <property type="project" value="UniProtKB-UniRule"/>
</dbReference>
<dbReference type="GO" id="GO:0001682">
    <property type="term" value="P:tRNA 5'-leader removal"/>
    <property type="evidence" value="ECO:0007669"/>
    <property type="project" value="UniProtKB-UniRule"/>
</dbReference>
<dbReference type="Gene3D" id="3.30.230.10">
    <property type="match status" value="1"/>
</dbReference>
<dbReference type="HAMAP" id="MF_00227">
    <property type="entry name" value="RNase_P"/>
    <property type="match status" value="1"/>
</dbReference>
<dbReference type="InterPro" id="IPR020568">
    <property type="entry name" value="Ribosomal_Su5_D2-typ_SF"/>
</dbReference>
<dbReference type="InterPro" id="IPR014721">
    <property type="entry name" value="Ribsml_uS5_D2-typ_fold_subgr"/>
</dbReference>
<dbReference type="InterPro" id="IPR000100">
    <property type="entry name" value="RNase_P"/>
</dbReference>
<dbReference type="InterPro" id="IPR020539">
    <property type="entry name" value="RNase_P_CS"/>
</dbReference>
<dbReference type="NCBIfam" id="TIGR00188">
    <property type="entry name" value="rnpA"/>
    <property type="match status" value="1"/>
</dbReference>
<dbReference type="PANTHER" id="PTHR33992">
    <property type="entry name" value="RIBONUCLEASE P PROTEIN COMPONENT"/>
    <property type="match status" value="1"/>
</dbReference>
<dbReference type="PANTHER" id="PTHR33992:SF1">
    <property type="entry name" value="RIBONUCLEASE P PROTEIN COMPONENT"/>
    <property type="match status" value="1"/>
</dbReference>
<dbReference type="Pfam" id="PF00825">
    <property type="entry name" value="Ribonuclease_P"/>
    <property type="match status" value="1"/>
</dbReference>
<dbReference type="SUPFAM" id="SSF54211">
    <property type="entry name" value="Ribosomal protein S5 domain 2-like"/>
    <property type="match status" value="1"/>
</dbReference>
<dbReference type="PROSITE" id="PS00648">
    <property type="entry name" value="RIBONUCLEASE_P"/>
    <property type="match status" value="1"/>
</dbReference>
<keyword id="KW-0255">Endonuclease</keyword>
<keyword id="KW-0378">Hydrolase</keyword>
<keyword id="KW-0540">Nuclease</keyword>
<keyword id="KW-0694">RNA-binding</keyword>
<keyword id="KW-0819">tRNA processing</keyword>
<reference key="1">
    <citation type="submission" date="2007-08" db="EMBL/GenBank/DDBJ databases">
        <authorList>
            <consortium name="The Vibrio harveyi Genome Sequencing Project"/>
            <person name="Bassler B."/>
            <person name="Clifton S.W."/>
            <person name="Fulton L."/>
            <person name="Delehaunty K."/>
            <person name="Fronick C."/>
            <person name="Harrison M."/>
            <person name="Markivic C."/>
            <person name="Fulton R."/>
            <person name="Tin-Wollam A.-M."/>
            <person name="Shah N."/>
            <person name="Pepin K."/>
            <person name="Nash W."/>
            <person name="Thiruvilangam P."/>
            <person name="Bhonagiri V."/>
            <person name="Waters C."/>
            <person name="Tu K.C."/>
            <person name="Irgon J."/>
            <person name="Wilson R.K."/>
        </authorList>
    </citation>
    <scope>NUCLEOTIDE SEQUENCE [LARGE SCALE GENOMIC DNA]</scope>
    <source>
        <strain>ATCC BAA-1116 / BB120</strain>
    </source>
</reference>
<name>RNPA_VIBC1</name>
<organism>
    <name type="scientific">Vibrio campbellii (strain ATCC BAA-1116)</name>
    <dbReference type="NCBI Taxonomy" id="2902295"/>
    <lineage>
        <taxon>Bacteria</taxon>
        <taxon>Pseudomonadati</taxon>
        <taxon>Pseudomonadota</taxon>
        <taxon>Gammaproteobacteria</taxon>
        <taxon>Vibrionales</taxon>
        <taxon>Vibrionaceae</taxon>
        <taxon>Vibrio</taxon>
    </lineage>
</organism>